<feature type="chain" id="PRO_0000421065" description="Cytokinin-beta-glucosidase 1">
    <location>
        <begin position="1"/>
        <end position="180"/>
    </location>
</feature>
<dbReference type="EC" id="3.2.1.-"/>
<dbReference type="EMBL" id="EU642406">
    <property type="protein sequence ID" value="ACD03672.1"/>
    <property type="molecule type" value="Genomic_DNA"/>
</dbReference>
<dbReference type="SMR" id="B2ZCQ0"/>
<dbReference type="GO" id="GO:0008422">
    <property type="term" value="F:beta-glucosidase activity"/>
    <property type="evidence" value="ECO:0007669"/>
    <property type="project" value="InterPro"/>
</dbReference>
<dbReference type="GO" id="GO:0005975">
    <property type="term" value="P:carbohydrate metabolic process"/>
    <property type="evidence" value="ECO:0007669"/>
    <property type="project" value="InterPro"/>
</dbReference>
<dbReference type="GO" id="GO:0009691">
    <property type="term" value="P:cytokinin biosynthetic process"/>
    <property type="evidence" value="ECO:0007669"/>
    <property type="project" value="UniProtKB-KW"/>
</dbReference>
<dbReference type="InterPro" id="IPR006065">
    <property type="entry name" value="Glyco_hydro_41"/>
</dbReference>
<dbReference type="PRINTS" id="PR00746">
    <property type="entry name" value="GLHYDRLASE41"/>
</dbReference>
<keyword id="KW-0203">Cytokinin biosynthesis</keyword>
<keyword id="KW-0326">Glycosidase</keyword>
<keyword id="KW-0378">Hydrolase</keyword>
<evidence type="ECO:0000250" key="1"/>
<accession>B2ZCQ0</accession>
<proteinExistence type="inferred from homology"/>
<name>ROLC1_PANGI</name>
<sequence>MAEDDLCSLFFKLKVEDVTSSDELARHMKNASNERKPLIEPGENQSMDIDEEGGSVGHGLLYLYVDCPTMMLCFYGGSLPYNWMQGALLTNLPPYQHDVTLDEVNRGLRQASGFFGYADPMRSAYFAAFSFPGRVIKLNEQMELTSTKGKCLTFDLYASTQLRFELGELVRHGECKFAIG</sequence>
<protein>
    <recommendedName>
        <fullName>Cytokinin-beta-glucosidase 1</fullName>
        <ecNumber>3.2.1.-</ecNumber>
    </recommendedName>
    <alternativeName>
        <fullName>Protein ROL C 1</fullName>
        <shortName>rolC1-Pg</shortName>
    </alternativeName>
</protein>
<reference key="1">
    <citation type="journal article" date="2009" name="Prikl. Biokhim. Mikrobiol.">
        <title>Stability of the rolC gene and its expression in 15-year-old cell cultures of Panax ginseng.</title>
        <authorList>
            <person name="Kisilev K.V."/>
            <person name="Bulgakov V.P."/>
        </authorList>
    </citation>
    <scope>NUCLEOTIDE SEQUENCE [GENOMIC DNA]</scope>
</reference>
<comment type="function">
    <text evidence="1">Hydrolyzes cytokinin glucosides thus liberating free cytokinins.</text>
</comment>
<gene>
    <name type="primary">ROLC1</name>
</gene>
<organism>
    <name type="scientific">Panax ginseng</name>
    <name type="common">Korean ginseng</name>
    <dbReference type="NCBI Taxonomy" id="4054"/>
    <lineage>
        <taxon>Eukaryota</taxon>
        <taxon>Viridiplantae</taxon>
        <taxon>Streptophyta</taxon>
        <taxon>Embryophyta</taxon>
        <taxon>Tracheophyta</taxon>
        <taxon>Spermatophyta</taxon>
        <taxon>Magnoliopsida</taxon>
        <taxon>eudicotyledons</taxon>
        <taxon>Gunneridae</taxon>
        <taxon>Pentapetalae</taxon>
        <taxon>asterids</taxon>
        <taxon>campanulids</taxon>
        <taxon>Apiales</taxon>
        <taxon>Araliaceae</taxon>
        <taxon>Panax</taxon>
    </lineage>
</organism>